<reference key="1">
    <citation type="journal article" date="2005" name="J. Bacteriol.">
        <title>Whole-genome sequencing of Staphylococcus haemolyticus uncovers the extreme plasticity of its genome and the evolution of human-colonizing staphylococcal species.</title>
        <authorList>
            <person name="Takeuchi F."/>
            <person name="Watanabe S."/>
            <person name="Baba T."/>
            <person name="Yuzawa H."/>
            <person name="Ito T."/>
            <person name="Morimoto Y."/>
            <person name="Kuroda M."/>
            <person name="Cui L."/>
            <person name="Takahashi M."/>
            <person name="Ankai A."/>
            <person name="Baba S."/>
            <person name="Fukui S."/>
            <person name="Lee J.C."/>
            <person name="Hiramatsu K."/>
        </authorList>
    </citation>
    <scope>NUCLEOTIDE SEQUENCE [LARGE SCALE GENOMIC DNA]</scope>
    <source>
        <strain>JCSC1435</strain>
    </source>
</reference>
<sequence>MNEEQRKAGTINILDERDRKVEKDYSKYFENIYQPPSLKEARKRGKQDINYNRDFHIEDKFEGMGKGRTFLIKTYGCQMNAHDTEVMAGILQALGYTATEDINEADVILINTCAIRENAENKVFSEIGNLKHLKKNRPEALIGVCGCMSQEESVVNKILKSYQNVDMIFGTHNIHKLPEILEEAYLSKAMVVEVWSKEGDIIENLPKVREGSTKAWVNIMYGCDKFCTYCIVPFTRGKERSRRPEDIIEEVRGLARDGYKEITLLGQNVNSYGKDIKDLEYGLGDLLEDISKIDIPRVRFTTSHPWDFTDRMIEVIAKGGNIVPHIHLPVQSGNNAVLKIMGRKYTRESYLDLVNRIKKSIPNVALTTDIIVGYPNETEEQFEETLSLYDEVQFEHAYTYLYSQRDGTPAAKMKDNVPEDVKKARLQRLNKKVGHYSEKAMNQYEGKTVTVLCEGSSKKDDTVLAGYTEKNKLVNFKGPREAIGKLVNVEIDETKQYSLNGTFKEFNDAPLVTN</sequence>
<evidence type="ECO:0000255" key="1">
    <source>
        <dbReference type="HAMAP-Rule" id="MF_01864"/>
    </source>
</evidence>
<evidence type="ECO:0000255" key="2">
    <source>
        <dbReference type="PROSITE-ProRule" id="PRU01266"/>
    </source>
</evidence>
<proteinExistence type="inferred from homology"/>
<gene>
    <name evidence="1" type="primary">miaB</name>
    <name type="ordered locus">SH1620</name>
</gene>
<comment type="function">
    <text evidence="1">Catalyzes the methylthiolation of N6-(dimethylallyl)adenosine (i(6)A), leading to the formation of 2-methylthio-N6-(dimethylallyl)adenosine (ms(2)i(6)A) at position 37 in tRNAs that read codons beginning with uridine.</text>
</comment>
<comment type="catalytic activity">
    <reaction evidence="1">
        <text>N(6)-dimethylallyladenosine(37) in tRNA + (sulfur carrier)-SH + AH2 + 2 S-adenosyl-L-methionine = 2-methylsulfanyl-N(6)-dimethylallyladenosine(37) in tRNA + (sulfur carrier)-H + 5'-deoxyadenosine + L-methionine + A + S-adenosyl-L-homocysteine + 2 H(+)</text>
        <dbReference type="Rhea" id="RHEA:37067"/>
        <dbReference type="Rhea" id="RHEA-COMP:10375"/>
        <dbReference type="Rhea" id="RHEA-COMP:10376"/>
        <dbReference type="Rhea" id="RHEA-COMP:14737"/>
        <dbReference type="Rhea" id="RHEA-COMP:14739"/>
        <dbReference type="ChEBI" id="CHEBI:13193"/>
        <dbReference type="ChEBI" id="CHEBI:15378"/>
        <dbReference type="ChEBI" id="CHEBI:17319"/>
        <dbReference type="ChEBI" id="CHEBI:17499"/>
        <dbReference type="ChEBI" id="CHEBI:29917"/>
        <dbReference type="ChEBI" id="CHEBI:57844"/>
        <dbReference type="ChEBI" id="CHEBI:57856"/>
        <dbReference type="ChEBI" id="CHEBI:59789"/>
        <dbReference type="ChEBI" id="CHEBI:64428"/>
        <dbReference type="ChEBI" id="CHEBI:74415"/>
        <dbReference type="ChEBI" id="CHEBI:74417"/>
        <dbReference type="EC" id="2.8.4.3"/>
    </reaction>
</comment>
<comment type="cofactor">
    <cofactor evidence="1">
        <name>[4Fe-4S] cluster</name>
        <dbReference type="ChEBI" id="CHEBI:49883"/>
    </cofactor>
    <text evidence="1">Binds 2 [4Fe-4S] clusters. One cluster is coordinated with 3 cysteines and an exchangeable S-adenosyl-L-methionine.</text>
</comment>
<comment type="subunit">
    <text evidence="1">Monomer.</text>
</comment>
<comment type="subcellular location">
    <subcellularLocation>
        <location evidence="1">Cytoplasm</location>
    </subcellularLocation>
</comment>
<comment type="similarity">
    <text evidence="1">Belongs to the methylthiotransferase family. MiaB subfamily.</text>
</comment>
<protein>
    <recommendedName>
        <fullName evidence="1">tRNA-2-methylthio-N(6)-dimethylallyladenosine synthase</fullName>
        <ecNumber evidence="1">2.8.4.3</ecNumber>
    </recommendedName>
    <alternativeName>
        <fullName evidence="1">(Dimethylallyl)adenosine tRNA methylthiotransferase MiaB</fullName>
    </alternativeName>
    <alternativeName>
        <fullName evidence="1">tRNA-i(6)A37 methylthiotransferase</fullName>
    </alternativeName>
</protein>
<feature type="chain" id="PRO_0000374580" description="tRNA-2-methylthio-N(6)-dimethylallyladenosine synthase">
    <location>
        <begin position="1"/>
        <end position="514"/>
    </location>
</feature>
<feature type="domain" description="MTTase N-terminal" evidence="1">
    <location>
        <begin position="68"/>
        <end position="186"/>
    </location>
</feature>
<feature type="domain" description="Radical SAM core" evidence="2">
    <location>
        <begin position="209"/>
        <end position="439"/>
    </location>
</feature>
<feature type="domain" description="TRAM" evidence="1">
    <location>
        <begin position="442"/>
        <end position="505"/>
    </location>
</feature>
<feature type="binding site" evidence="1">
    <location>
        <position position="77"/>
    </location>
    <ligand>
        <name>[4Fe-4S] cluster</name>
        <dbReference type="ChEBI" id="CHEBI:49883"/>
        <label>1</label>
    </ligand>
</feature>
<feature type="binding site" evidence="1">
    <location>
        <position position="113"/>
    </location>
    <ligand>
        <name>[4Fe-4S] cluster</name>
        <dbReference type="ChEBI" id="CHEBI:49883"/>
        <label>1</label>
    </ligand>
</feature>
<feature type="binding site" evidence="1">
    <location>
        <position position="147"/>
    </location>
    <ligand>
        <name>[4Fe-4S] cluster</name>
        <dbReference type="ChEBI" id="CHEBI:49883"/>
        <label>1</label>
    </ligand>
</feature>
<feature type="binding site" evidence="1">
    <location>
        <position position="223"/>
    </location>
    <ligand>
        <name>[4Fe-4S] cluster</name>
        <dbReference type="ChEBI" id="CHEBI:49883"/>
        <label>2</label>
        <note>4Fe-4S-S-AdoMet</note>
    </ligand>
</feature>
<feature type="binding site" evidence="1">
    <location>
        <position position="227"/>
    </location>
    <ligand>
        <name>[4Fe-4S] cluster</name>
        <dbReference type="ChEBI" id="CHEBI:49883"/>
        <label>2</label>
        <note>4Fe-4S-S-AdoMet</note>
    </ligand>
</feature>
<feature type="binding site" evidence="1">
    <location>
        <position position="230"/>
    </location>
    <ligand>
        <name>[4Fe-4S] cluster</name>
        <dbReference type="ChEBI" id="CHEBI:49883"/>
        <label>2</label>
        <note>4Fe-4S-S-AdoMet</note>
    </ligand>
</feature>
<organism>
    <name type="scientific">Staphylococcus haemolyticus (strain JCSC1435)</name>
    <dbReference type="NCBI Taxonomy" id="279808"/>
    <lineage>
        <taxon>Bacteria</taxon>
        <taxon>Bacillati</taxon>
        <taxon>Bacillota</taxon>
        <taxon>Bacilli</taxon>
        <taxon>Bacillales</taxon>
        <taxon>Staphylococcaceae</taxon>
        <taxon>Staphylococcus</taxon>
    </lineage>
</organism>
<dbReference type="EC" id="2.8.4.3" evidence="1"/>
<dbReference type="EMBL" id="AP006716">
    <property type="protein sequence ID" value="BAE04929.1"/>
    <property type="molecule type" value="Genomic_DNA"/>
</dbReference>
<dbReference type="RefSeq" id="WP_011275906.1">
    <property type="nucleotide sequence ID" value="NC_007168.1"/>
</dbReference>
<dbReference type="SMR" id="Q4L5Z6"/>
<dbReference type="GeneID" id="93780999"/>
<dbReference type="KEGG" id="sha:SH1620"/>
<dbReference type="eggNOG" id="COG0621">
    <property type="taxonomic scope" value="Bacteria"/>
</dbReference>
<dbReference type="HOGENOM" id="CLU_018697_2_0_9"/>
<dbReference type="OrthoDB" id="9805215at2"/>
<dbReference type="Proteomes" id="UP000000543">
    <property type="component" value="Chromosome"/>
</dbReference>
<dbReference type="GO" id="GO:0005829">
    <property type="term" value="C:cytosol"/>
    <property type="evidence" value="ECO:0007669"/>
    <property type="project" value="TreeGrafter"/>
</dbReference>
<dbReference type="GO" id="GO:0051539">
    <property type="term" value="F:4 iron, 4 sulfur cluster binding"/>
    <property type="evidence" value="ECO:0007669"/>
    <property type="project" value="UniProtKB-UniRule"/>
</dbReference>
<dbReference type="GO" id="GO:0046872">
    <property type="term" value="F:metal ion binding"/>
    <property type="evidence" value="ECO:0007669"/>
    <property type="project" value="UniProtKB-KW"/>
</dbReference>
<dbReference type="GO" id="GO:0035597">
    <property type="term" value="F:N6-isopentenyladenosine methylthiotransferase activity"/>
    <property type="evidence" value="ECO:0007669"/>
    <property type="project" value="TreeGrafter"/>
</dbReference>
<dbReference type="CDD" id="cd01335">
    <property type="entry name" value="Radical_SAM"/>
    <property type="match status" value="1"/>
</dbReference>
<dbReference type="FunFam" id="3.40.50.12160:FF:000006">
    <property type="entry name" value="tRNA-2-methylthio-N(6)-dimethylallyladenosine synthase"/>
    <property type="match status" value="1"/>
</dbReference>
<dbReference type="FunFam" id="3.80.30.20:FF:000001">
    <property type="entry name" value="tRNA-2-methylthio-N(6)-dimethylallyladenosine synthase 2"/>
    <property type="match status" value="1"/>
</dbReference>
<dbReference type="Gene3D" id="3.40.50.12160">
    <property type="entry name" value="Methylthiotransferase, N-terminal domain"/>
    <property type="match status" value="1"/>
</dbReference>
<dbReference type="Gene3D" id="3.80.30.20">
    <property type="entry name" value="tm_1862 like domain"/>
    <property type="match status" value="1"/>
</dbReference>
<dbReference type="HAMAP" id="MF_01864">
    <property type="entry name" value="tRNA_metthiotr_MiaB"/>
    <property type="match status" value="1"/>
</dbReference>
<dbReference type="InterPro" id="IPR006638">
    <property type="entry name" value="Elp3/MiaA/NifB-like_rSAM"/>
</dbReference>
<dbReference type="InterPro" id="IPR005839">
    <property type="entry name" value="Methylthiotransferase"/>
</dbReference>
<dbReference type="InterPro" id="IPR020612">
    <property type="entry name" value="Methylthiotransferase_CS"/>
</dbReference>
<dbReference type="InterPro" id="IPR013848">
    <property type="entry name" value="Methylthiotransferase_N"/>
</dbReference>
<dbReference type="InterPro" id="IPR038135">
    <property type="entry name" value="Methylthiotransferase_N_sf"/>
</dbReference>
<dbReference type="InterPro" id="IPR006463">
    <property type="entry name" value="MiaB_methiolase"/>
</dbReference>
<dbReference type="InterPro" id="IPR007197">
    <property type="entry name" value="rSAM"/>
</dbReference>
<dbReference type="InterPro" id="IPR023404">
    <property type="entry name" value="rSAM_horseshoe"/>
</dbReference>
<dbReference type="InterPro" id="IPR002792">
    <property type="entry name" value="TRAM_dom"/>
</dbReference>
<dbReference type="NCBIfam" id="TIGR01574">
    <property type="entry name" value="miaB-methiolase"/>
    <property type="match status" value="1"/>
</dbReference>
<dbReference type="NCBIfam" id="TIGR00089">
    <property type="entry name" value="MiaB/RimO family radical SAM methylthiotransferase"/>
    <property type="match status" value="1"/>
</dbReference>
<dbReference type="PANTHER" id="PTHR43020">
    <property type="entry name" value="CDK5 REGULATORY SUBUNIT-ASSOCIATED PROTEIN 1"/>
    <property type="match status" value="1"/>
</dbReference>
<dbReference type="PANTHER" id="PTHR43020:SF2">
    <property type="entry name" value="MITOCHONDRIAL TRNA METHYLTHIOTRANSFERASE CDK5RAP1"/>
    <property type="match status" value="1"/>
</dbReference>
<dbReference type="Pfam" id="PF04055">
    <property type="entry name" value="Radical_SAM"/>
    <property type="match status" value="1"/>
</dbReference>
<dbReference type="Pfam" id="PF01938">
    <property type="entry name" value="TRAM"/>
    <property type="match status" value="1"/>
</dbReference>
<dbReference type="Pfam" id="PF00919">
    <property type="entry name" value="UPF0004"/>
    <property type="match status" value="1"/>
</dbReference>
<dbReference type="SFLD" id="SFLDF00273">
    <property type="entry name" value="(dimethylallyl)adenosine_tRNA"/>
    <property type="match status" value="1"/>
</dbReference>
<dbReference type="SFLD" id="SFLDG01082">
    <property type="entry name" value="B12-binding_domain_containing"/>
    <property type="match status" value="1"/>
</dbReference>
<dbReference type="SFLD" id="SFLDS00029">
    <property type="entry name" value="Radical_SAM"/>
    <property type="match status" value="1"/>
</dbReference>
<dbReference type="SMART" id="SM00729">
    <property type="entry name" value="Elp3"/>
    <property type="match status" value="1"/>
</dbReference>
<dbReference type="SUPFAM" id="SSF102114">
    <property type="entry name" value="Radical SAM enzymes"/>
    <property type="match status" value="1"/>
</dbReference>
<dbReference type="PROSITE" id="PS51449">
    <property type="entry name" value="MTTASE_N"/>
    <property type="match status" value="1"/>
</dbReference>
<dbReference type="PROSITE" id="PS01278">
    <property type="entry name" value="MTTASE_RADICAL"/>
    <property type="match status" value="1"/>
</dbReference>
<dbReference type="PROSITE" id="PS51918">
    <property type="entry name" value="RADICAL_SAM"/>
    <property type="match status" value="1"/>
</dbReference>
<dbReference type="PROSITE" id="PS50926">
    <property type="entry name" value="TRAM"/>
    <property type="match status" value="1"/>
</dbReference>
<accession>Q4L5Z6</accession>
<name>MIAB_STAHJ</name>
<keyword id="KW-0004">4Fe-4S</keyword>
<keyword id="KW-0963">Cytoplasm</keyword>
<keyword id="KW-0408">Iron</keyword>
<keyword id="KW-0411">Iron-sulfur</keyword>
<keyword id="KW-0479">Metal-binding</keyword>
<keyword id="KW-0949">S-adenosyl-L-methionine</keyword>
<keyword id="KW-0808">Transferase</keyword>
<keyword id="KW-0819">tRNA processing</keyword>